<organism>
    <name type="scientific">Rhodopseudomonas palustris (strain ATCC BAA-98 / CGA009)</name>
    <dbReference type="NCBI Taxonomy" id="258594"/>
    <lineage>
        <taxon>Bacteria</taxon>
        <taxon>Pseudomonadati</taxon>
        <taxon>Pseudomonadota</taxon>
        <taxon>Alphaproteobacteria</taxon>
        <taxon>Hyphomicrobiales</taxon>
        <taxon>Nitrobacteraceae</taxon>
        <taxon>Rhodopseudomonas</taxon>
    </lineage>
</organism>
<accession>P61536</accession>
<comment type="function">
    <text evidence="1">The RuvA-RuvB-RuvC complex processes Holliday junction (HJ) DNA during genetic recombination and DNA repair, while the RuvA-RuvB complex plays an important role in the rescue of blocked DNA replication forks via replication fork reversal (RFR). RuvA specifically binds to HJ cruciform DNA, conferring on it an open structure. The RuvB hexamer acts as an ATP-dependent pump, pulling dsDNA into and through the RuvAB complex. RuvB forms 2 homohexamers on either side of HJ DNA bound by 1 or 2 RuvA tetramers; 4 subunits per hexamer contact DNA at a time. Coordinated motions by a converter formed by DNA-disengaged RuvB subunits stimulates ATP hydrolysis and nucleotide exchange. Immobilization of the converter enables RuvB to convert the ATP-contained energy into a lever motion, pulling 2 nucleotides of DNA out of the RuvA tetramer per ATP hydrolyzed, thus driving DNA branch migration. The RuvB motors rotate together with the DNA substrate, which together with the progressing nucleotide cycle form the mechanistic basis for DNA recombination by continuous HJ branch migration. Branch migration allows RuvC to scan DNA until it finds its consensus sequence, where it cleaves and resolves cruciform DNA.</text>
</comment>
<comment type="catalytic activity">
    <reaction evidence="1">
        <text>ATP + H2O = ADP + phosphate + H(+)</text>
        <dbReference type="Rhea" id="RHEA:13065"/>
        <dbReference type="ChEBI" id="CHEBI:15377"/>
        <dbReference type="ChEBI" id="CHEBI:15378"/>
        <dbReference type="ChEBI" id="CHEBI:30616"/>
        <dbReference type="ChEBI" id="CHEBI:43474"/>
        <dbReference type="ChEBI" id="CHEBI:456216"/>
    </reaction>
</comment>
<comment type="subunit">
    <text evidence="1">Homohexamer. Forms an RuvA(8)-RuvB(12)-Holliday junction (HJ) complex. HJ DNA is sandwiched between 2 RuvA tetramers; dsDNA enters through RuvA and exits via RuvB. An RuvB hexamer assembles on each DNA strand where it exits the tetramer. Each RuvB hexamer is contacted by two RuvA subunits (via domain III) on 2 adjacent RuvB subunits; this complex drives branch migration. In the full resolvosome a probable DNA-RuvA(4)-RuvB(12)-RuvC(2) complex forms which resolves the HJ.</text>
</comment>
<comment type="subcellular location">
    <subcellularLocation>
        <location evidence="1">Cytoplasm</location>
    </subcellularLocation>
</comment>
<comment type="domain">
    <text evidence="1">Has 3 domains, the large (RuvB-L) and small ATPase (RuvB-S) domains and the C-terminal head (RuvB-H) domain. The head domain binds DNA, while the ATPase domains jointly bind ATP, ADP or are empty depending on the state of the subunit in the translocation cycle. During a single DNA translocation step the structure of each domain remains the same, but their relative positions change.</text>
</comment>
<comment type="similarity">
    <text evidence="1">Belongs to the RuvB family.</text>
</comment>
<protein>
    <recommendedName>
        <fullName evidence="1">Holliday junction branch migration complex subunit RuvB</fullName>
        <ecNumber evidence="1">3.6.4.-</ecNumber>
    </recommendedName>
</protein>
<keyword id="KW-0067">ATP-binding</keyword>
<keyword id="KW-0963">Cytoplasm</keyword>
<keyword id="KW-0227">DNA damage</keyword>
<keyword id="KW-0233">DNA recombination</keyword>
<keyword id="KW-0234">DNA repair</keyword>
<keyword id="KW-0238">DNA-binding</keyword>
<keyword id="KW-0378">Hydrolase</keyword>
<keyword id="KW-0547">Nucleotide-binding</keyword>
<dbReference type="EC" id="3.6.4.-" evidence="1"/>
<dbReference type="EMBL" id="BX572596">
    <property type="protein sequence ID" value="CAE26545.1"/>
    <property type="molecule type" value="Genomic_DNA"/>
</dbReference>
<dbReference type="RefSeq" id="WP_011156666.1">
    <property type="nucleotide sequence ID" value="NZ_CP116810.1"/>
</dbReference>
<dbReference type="SMR" id="P61536"/>
<dbReference type="STRING" id="258594.RPA1102"/>
<dbReference type="GeneID" id="66892123"/>
<dbReference type="eggNOG" id="COG2255">
    <property type="taxonomic scope" value="Bacteria"/>
</dbReference>
<dbReference type="HOGENOM" id="CLU_055599_1_0_5"/>
<dbReference type="PhylomeDB" id="P61536"/>
<dbReference type="GO" id="GO:0005737">
    <property type="term" value="C:cytoplasm"/>
    <property type="evidence" value="ECO:0007669"/>
    <property type="project" value="UniProtKB-SubCell"/>
</dbReference>
<dbReference type="GO" id="GO:0048476">
    <property type="term" value="C:Holliday junction resolvase complex"/>
    <property type="evidence" value="ECO:0007669"/>
    <property type="project" value="UniProtKB-UniRule"/>
</dbReference>
<dbReference type="GO" id="GO:0005524">
    <property type="term" value="F:ATP binding"/>
    <property type="evidence" value="ECO:0007669"/>
    <property type="project" value="UniProtKB-UniRule"/>
</dbReference>
<dbReference type="GO" id="GO:0016887">
    <property type="term" value="F:ATP hydrolysis activity"/>
    <property type="evidence" value="ECO:0007669"/>
    <property type="project" value="InterPro"/>
</dbReference>
<dbReference type="GO" id="GO:0000400">
    <property type="term" value="F:four-way junction DNA binding"/>
    <property type="evidence" value="ECO:0007669"/>
    <property type="project" value="UniProtKB-UniRule"/>
</dbReference>
<dbReference type="GO" id="GO:0009378">
    <property type="term" value="F:four-way junction helicase activity"/>
    <property type="evidence" value="ECO:0007669"/>
    <property type="project" value="InterPro"/>
</dbReference>
<dbReference type="GO" id="GO:0006310">
    <property type="term" value="P:DNA recombination"/>
    <property type="evidence" value="ECO:0007669"/>
    <property type="project" value="UniProtKB-UniRule"/>
</dbReference>
<dbReference type="GO" id="GO:0006281">
    <property type="term" value="P:DNA repair"/>
    <property type="evidence" value="ECO:0007669"/>
    <property type="project" value="UniProtKB-UniRule"/>
</dbReference>
<dbReference type="CDD" id="cd00009">
    <property type="entry name" value="AAA"/>
    <property type="match status" value="1"/>
</dbReference>
<dbReference type="FunFam" id="3.40.50.300:FF:000073">
    <property type="entry name" value="Holliday junction ATP-dependent DNA helicase RuvB"/>
    <property type="match status" value="1"/>
</dbReference>
<dbReference type="Gene3D" id="1.10.8.60">
    <property type="match status" value="1"/>
</dbReference>
<dbReference type="Gene3D" id="3.40.50.300">
    <property type="entry name" value="P-loop containing nucleotide triphosphate hydrolases"/>
    <property type="match status" value="1"/>
</dbReference>
<dbReference type="Gene3D" id="1.10.10.10">
    <property type="entry name" value="Winged helix-like DNA-binding domain superfamily/Winged helix DNA-binding domain"/>
    <property type="match status" value="1"/>
</dbReference>
<dbReference type="HAMAP" id="MF_00016">
    <property type="entry name" value="DNA_HJ_migration_RuvB"/>
    <property type="match status" value="1"/>
</dbReference>
<dbReference type="InterPro" id="IPR003593">
    <property type="entry name" value="AAA+_ATPase"/>
</dbReference>
<dbReference type="InterPro" id="IPR041445">
    <property type="entry name" value="AAA_lid_4"/>
</dbReference>
<dbReference type="InterPro" id="IPR004605">
    <property type="entry name" value="DNA_helicase_Holl-junc_RuvB"/>
</dbReference>
<dbReference type="InterPro" id="IPR027417">
    <property type="entry name" value="P-loop_NTPase"/>
</dbReference>
<dbReference type="InterPro" id="IPR008824">
    <property type="entry name" value="RuvB-like_N"/>
</dbReference>
<dbReference type="InterPro" id="IPR008823">
    <property type="entry name" value="RuvB_C"/>
</dbReference>
<dbReference type="InterPro" id="IPR036388">
    <property type="entry name" value="WH-like_DNA-bd_sf"/>
</dbReference>
<dbReference type="InterPro" id="IPR036390">
    <property type="entry name" value="WH_DNA-bd_sf"/>
</dbReference>
<dbReference type="NCBIfam" id="NF000868">
    <property type="entry name" value="PRK00080.1"/>
    <property type="match status" value="1"/>
</dbReference>
<dbReference type="NCBIfam" id="TIGR00635">
    <property type="entry name" value="ruvB"/>
    <property type="match status" value="1"/>
</dbReference>
<dbReference type="PANTHER" id="PTHR42848">
    <property type="match status" value="1"/>
</dbReference>
<dbReference type="PANTHER" id="PTHR42848:SF1">
    <property type="entry name" value="HOLLIDAY JUNCTION BRANCH MIGRATION COMPLEX SUBUNIT RUVB"/>
    <property type="match status" value="1"/>
</dbReference>
<dbReference type="Pfam" id="PF17864">
    <property type="entry name" value="AAA_lid_4"/>
    <property type="match status" value="1"/>
</dbReference>
<dbReference type="Pfam" id="PF05491">
    <property type="entry name" value="RuvB_C"/>
    <property type="match status" value="1"/>
</dbReference>
<dbReference type="Pfam" id="PF05496">
    <property type="entry name" value="RuvB_N"/>
    <property type="match status" value="1"/>
</dbReference>
<dbReference type="SMART" id="SM00382">
    <property type="entry name" value="AAA"/>
    <property type="match status" value="1"/>
</dbReference>
<dbReference type="SUPFAM" id="SSF52540">
    <property type="entry name" value="P-loop containing nucleoside triphosphate hydrolases"/>
    <property type="match status" value="1"/>
</dbReference>
<dbReference type="SUPFAM" id="SSF46785">
    <property type="entry name" value="Winged helix' DNA-binding domain"/>
    <property type="match status" value="1"/>
</dbReference>
<evidence type="ECO:0000255" key="1">
    <source>
        <dbReference type="HAMAP-Rule" id="MF_00016"/>
    </source>
</evidence>
<feature type="chain" id="PRO_0000165586" description="Holliday junction branch migration complex subunit RuvB">
    <location>
        <begin position="1"/>
        <end position="349"/>
    </location>
</feature>
<feature type="region of interest" description="Large ATPase domain (RuvB-L)" evidence="1">
    <location>
        <begin position="1"/>
        <end position="183"/>
    </location>
</feature>
<feature type="region of interest" description="Small ATPAse domain (RuvB-S)" evidence="1">
    <location>
        <begin position="184"/>
        <end position="254"/>
    </location>
</feature>
<feature type="region of interest" description="Head domain (RuvB-H)" evidence="1">
    <location>
        <begin position="257"/>
        <end position="349"/>
    </location>
</feature>
<feature type="binding site" evidence="1">
    <location>
        <position position="22"/>
    </location>
    <ligand>
        <name>ATP</name>
        <dbReference type="ChEBI" id="CHEBI:30616"/>
    </ligand>
</feature>
<feature type="binding site" evidence="1">
    <location>
        <position position="23"/>
    </location>
    <ligand>
        <name>ATP</name>
        <dbReference type="ChEBI" id="CHEBI:30616"/>
    </ligand>
</feature>
<feature type="binding site" evidence="1">
    <location>
        <position position="64"/>
    </location>
    <ligand>
        <name>ATP</name>
        <dbReference type="ChEBI" id="CHEBI:30616"/>
    </ligand>
</feature>
<feature type="binding site" evidence="1">
    <location>
        <position position="67"/>
    </location>
    <ligand>
        <name>ATP</name>
        <dbReference type="ChEBI" id="CHEBI:30616"/>
    </ligand>
</feature>
<feature type="binding site" evidence="1">
    <location>
        <position position="68"/>
    </location>
    <ligand>
        <name>ATP</name>
        <dbReference type="ChEBI" id="CHEBI:30616"/>
    </ligand>
</feature>
<feature type="binding site" evidence="1">
    <location>
        <position position="68"/>
    </location>
    <ligand>
        <name>Mg(2+)</name>
        <dbReference type="ChEBI" id="CHEBI:18420"/>
    </ligand>
</feature>
<feature type="binding site" evidence="1">
    <location>
        <position position="69"/>
    </location>
    <ligand>
        <name>ATP</name>
        <dbReference type="ChEBI" id="CHEBI:30616"/>
    </ligand>
</feature>
<feature type="binding site" evidence="1">
    <location>
        <begin position="130"/>
        <end position="132"/>
    </location>
    <ligand>
        <name>ATP</name>
        <dbReference type="ChEBI" id="CHEBI:30616"/>
    </ligand>
</feature>
<feature type="binding site" evidence="1">
    <location>
        <position position="173"/>
    </location>
    <ligand>
        <name>ATP</name>
        <dbReference type="ChEBI" id="CHEBI:30616"/>
    </ligand>
</feature>
<feature type="binding site" evidence="1">
    <location>
        <position position="183"/>
    </location>
    <ligand>
        <name>ATP</name>
        <dbReference type="ChEBI" id="CHEBI:30616"/>
    </ligand>
</feature>
<feature type="binding site" evidence="1">
    <location>
        <position position="220"/>
    </location>
    <ligand>
        <name>ATP</name>
        <dbReference type="ChEBI" id="CHEBI:30616"/>
    </ligand>
</feature>
<feature type="binding site" evidence="1">
    <location>
        <position position="293"/>
    </location>
    <ligand>
        <name>DNA</name>
        <dbReference type="ChEBI" id="CHEBI:16991"/>
    </ligand>
</feature>
<feature type="binding site" evidence="1">
    <location>
        <position position="312"/>
    </location>
    <ligand>
        <name>DNA</name>
        <dbReference type="ChEBI" id="CHEBI:16991"/>
    </ligand>
</feature>
<feature type="binding site" evidence="1">
    <location>
        <position position="317"/>
    </location>
    <ligand>
        <name>DNA</name>
        <dbReference type="ChEBI" id="CHEBI:16991"/>
    </ligand>
</feature>
<reference key="1">
    <citation type="journal article" date="2004" name="Nat. Biotechnol.">
        <title>Complete genome sequence of the metabolically versatile photosynthetic bacterium Rhodopseudomonas palustris.</title>
        <authorList>
            <person name="Larimer F.W."/>
            <person name="Chain P."/>
            <person name="Hauser L."/>
            <person name="Lamerdin J.E."/>
            <person name="Malfatti S."/>
            <person name="Do L."/>
            <person name="Land M.L."/>
            <person name="Pelletier D.A."/>
            <person name="Beatty J.T."/>
            <person name="Lang A.S."/>
            <person name="Tabita F.R."/>
            <person name="Gibson J.L."/>
            <person name="Hanson T.E."/>
            <person name="Bobst C."/>
            <person name="Torres y Torres J.L."/>
            <person name="Peres C."/>
            <person name="Harrison F.H."/>
            <person name="Gibson J."/>
            <person name="Harwood C.S."/>
        </authorList>
    </citation>
    <scope>NUCLEOTIDE SEQUENCE [LARGE SCALE GENOMIC DNA]</scope>
    <source>
        <strain>ATCC BAA-98 / CGA009</strain>
    </source>
</reference>
<proteinExistence type="inferred from homology"/>
<name>RUVB_RHOPA</name>
<gene>
    <name evidence="1" type="primary">ruvB</name>
    <name type="ordered locus">RPA1102</name>
</gene>
<sequence length="349" mass="37779">MTDPSRLVTPERRGDDLGDAALRPQNLSEFVGQQQARANLQVFIDAARKRKEALDHVLFVGPPGLGKTTLAQIVARELGVGFRATSGPVIAKAGDLAALLTNLEERDVLFIDEIHRLSPSVEEVLYPAMEDFQLDLIIGEGPAARSVKIDLSKFTLVGATTRAGLLTNPLRDRFGIPIRLNFYTIEELESIVTRGARVLGTPITADGANEIARRARGTPRIAGRLLRRVRDFASAADAEAIDRAIADHALGALEVDSAGLDAMDRRYLTTIALNYGGGPVGVETMAAALSEPRDAIEDIIEPYLIQCGYLQRTPRGRLLTDHAFRHLGLAAPSRDPAQFGLFGDTGDQE</sequence>